<protein>
    <recommendedName>
        <fullName evidence="1">Fluoride-specific ion channel FluC</fullName>
    </recommendedName>
</protein>
<feature type="chain" id="PRO_0000110119" description="Fluoride-specific ion channel FluC">
    <location>
        <begin position="1"/>
        <end position="134"/>
    </location>
</feature>
<feature type="transmembrane region" description="Helical" evidence="1">
    <location>
        <begin position="7"/>
        <end position="27"/>
    </location>
</feature>
<feature type="transmembrane region" description="Helical" evidence="1">
    <location>
        <begin position="38"/>
        <end position="58"/>
    </location>
</feature>
<feature type="transmembrane region" description="Helical" evidence="1">
    <location>
        <begin position="69"/>
        <end position="89"/>
    </location>
</feature>
<feature type="transmembrane region" description="Helical" evidence="1">
    <location>
        <begin position="110"/>
        <end position="130"/>
    </location>
</feature>
<feature type="binding site" evidence="1">
    <location>
        <position position="77"/>
    </location>
    <ligand>
        <name>Na(+)</name>
        <dbReference type="ChEBI" id="CHEBI:29101"/>
        <note>structural</note>
    </ligand>
</feature>
<feature type="binding site" evidence="1">
    <location>
        <position position="80"/>
    </location>
    <ligand>
        <name>Na(+)</name>
        <dbReference type="ChEBI" id="CHEBI:29101"/>
        <note>structural</note>
    </ligand>
</feature>
<evidence type="ECO:0000255" key="1">
    <source>
        <dbReference type="HAMAP-Rule" id="MF_00454"/>
    </source>
</evidence>
<accession>Q5ZY60</accession>
<gene>
    <name evidence="1" type="primary">fluC</name>
    <name evidence="1" type="synonym">crcB</name>
    <name type="ordered locus">lpg0512</name>
</gene>
<organism>
    <name type="scientific">Legionella pneumophila subsp. pneumophila (strain Philadelphia 1 / ATCC 33152 / DSM 7513)</name>
    <dbReference type="NCBI Taxonomy" id="272624"/>
    <lineage>
        <taxon>Bacteria</taxon>
        <taxon>Pseudomonadati</taxon>
        <taxon>Pseudomonadota</taxon>
        <taxon>Gammaproteobacteria</taxon>
        <taxon>Legionellales</taxon>
        <taxon>Legionellaceae</taxon>
        <taxon>Legionella</taxon>
    </lineage>
</organism>
<proteinExistence type="inferred from homology"/>
<name>FLUC_LEGPH</name>
<comment type="function">
    <text evidence="1">Fluoride-specific ion channel. Important for reducing fluoride concentration in the cell, thus reducing its toxicity.</text>
</comment>
<comment type="catalytic activity">
    <reaction evidence="1">
        <text>fluoride(in) = fluoride(out)</text>
        <dbReference type="Rhea" id="RHEA:76159"/>
        <dbReference type="ChEBI" id="CHEBI:17051"/>
    </reaction>
    <physiologicalReaction direction="left-to-right" evidence="1">
        <dbReference type="Rhea" id="RHEA:76160"/>
    </physiologicalReaction>
</comment>
<comment type="activity regulation">
    <text evidence="1">Na(+) is not transported, but it plays an essential structural role and its presence is essential for fluoride channel function.</text>
</comment>
<comment type="subcellular location">
    <subcellularLocation>
        <location evidence="1">Cell inner membrane</location>
        <topology evidence="1">Multi-pass membrane protein</topology>
    </subcellularLocation>
</comment>
<comment type="similarity">
    <text evidence="1">Belongs to the fluoride channel Fluc/FEX (TC 1.A.43) family.</text>
</comment>
<sequence length="134" mass="14612">MVVAPYLAVAIGGSLGAMSRYLVTIMAQNAWGIKFPYGTLLVNTLGSFLAGFFLIVLVGRFSAEESFRLFLFTGFLGAFTTFSSFAAESLFMFEQGYWFKLMTNILVNNVGSLSMVFIGTLVAKYVLLGHQGSN</sequence>
<dbReference type="EMBL" id="AE017354">
    <property type="protein sequence ID" value="AAU26609.1"/>
    <property type="molecule type" value="Genomic_DNA"/>
</dbReference>
<dbReference type="RefSeq" id="WP_010946260.1">
    <property type="nucleotide sequence ID" value="NC_002942.5"/>
</dbReference>
<dbReference type="RefSeq" id="YP_094556.1">
    <property type="nucleotide sequence ID" value="NC_002942.5"/>
</dbReference>
<dbReference type="SMR" id="Q5ZY60"/>
<dbReference type="STRING" id="272624.lpg0512"/>
<dbReference type="PaxDb" id="272624-lpg0512"/>
<dbReference type="GeneID" id="57034512"/>
<dbReference type="KEGG" id="lpn:lpg0512"/>
<dbReference type="PATRIC" id="fig|272624.6.peg.533"/>
<dbReference type="eggNOG" id="COG0239">
    <property type="taxonomic scope" value="Bacteria"/>
</dbReference>
<dbReference type="HOGENOM" id="CLU_114342_2_3_6"/>
<dbReference type="OrthoDB" id="9806299at2"/>
<dbReference type="Proteomes" id="UP000000609">
    <property type="component" value="Chromosome"/>
</dbReference>
<dbReference type="GO" id="GO:0005886">
    <property type="term" value="C:plasma membrane"/>
    <property type="evidence" value="ECO:0007669"/>
    <property type="project" value="UniProtKB-SubCell"/>
</dbReference>
<dbReference type="GO" id="GO:0062054">
    <property type="term" value="F:fluoride channel activity"/>
    <property type="evidence" value="ECO:0007669"/>
    <property type="project" value="UniProtKB-UniRule"/>
</dbReference>
<dbReference type="GO" id="GO:0046872">
    <property type="term" value="F:metal ion binding"/>
    <property type="evidence" value="ECO:0007669"/>
    <property type="project" value="UniProtKB-KW"/>
</dbReference>
<dbReference type="GO" id="GO:0140114">
    <property type="term" value="P:cellular detoxification of fluoride"/>
    <property type="evidence" value="ECO:0007669"/>
    <property type="project" value="UniProtKB-UniRule"/>
</dbReference>
<dbReference type="HAMAP" id="MF_00454">
    <property type="entry name" value="FluC"/>
    <property type="match status" value="1"/>
</dbReference>
<dbReference type="InterPro" id="IPR003691">
    <property type="entry name" value="FluC"/>
</dbReference>
<dbReference type="NCBIfam" id="TIGR00494">
    <property type="entry name" value="crcB"/>
    <property type="match status" value="1"/>
</dbReference>
<dbReference type="PANTHER" id="PTHR28259">
    <property type="entry name" value="FLUORIDE EXPORT PROTEIN 1-RELATED"/>
    <property type="match status" value="1"/>
</dbReference>
<dbReference type="PANTHER" id="PTHR28259:SF1">
    <property type="entry name" value="FLUORIDE EXPORT PROTEIN 1-RELATED"/>
    <property type="match status" value="1"/>
</dbReference>
<dbReference type="Pfam" id="PF02537">
    <property type="entry name" value="CRCB"/>
    <property type="match status" value="1"/>
</dbReference>
<reference key="1">
    <citation type="journal article" date="2004" name="Science">
        <title>The genomic sequence of the accidental pathogen Legionella pneumophila.</title>
        <authorList>
            <person name="Chien M."/>
            <person name="Morozova I."/>
            <person name="Shi S."/>
            <person name="Sheng H."/>
            <person name="Chen J."/>
            <person name="Gomez S.M."/>
            <person name="Asamani G."/>
            <person name="Hill K."/>
            <person name="Nuara J."/>
            <person name="Feder M."/>
            <person name="Rineer J."/>
            <person name="Greenberg J.J."/>
            <person name="Steshenko V."/>
            <person name="Park S.H."/>
            <person name="Zhao B."/>
            <person name="Teplitskaya E."/>
            <person name="Edwards J.R."/>
            <person name="Pampou S."/>
            <person name="Georghiou A."/>
            <person name="Chou I.-C."/>
            <person name="Iannuccilli W."/>
            <person name="Ulz M.E."/>
            <person name="Kim D.H."/>
            <person name="Geringer-Sameth A."/>
            <person name="Goldsberry C."/>
            <person name="Morozov P."/>
            <person name="Fischer S.G."/>
            <person name="Segal G."/>
            <person name="Qu X."/>
            <person name="Rzhetsky A."/>
            <person name="Zhang P."/>
            <person name="Cayanis E."/>
            <person name="De Jong P.J."/>
            <person name="Ju J."/>
            <person name="Kalachikov S."/>
            <person name="Shuman H.A."/>
            <person name="Russo J.J."/>
        </authorList>
    </citation>
    <scope>NUCLEOTIDE SEQUENCE [LARGE SCALE GENOMIC DNA]</scope>
    <source>
        <strain>Philadelphia 1 / ATCC 33152 / DSM 7513</strain>
    </source>
</reference>
<keyword id="KW-0997">Cell inner membrane</keyword>
<keyword id="KW-1003">Cell membrane</keyword>
<keyword id="KW-0407">Ion channel</keyword>
<keyword id="KW-0406">Ion transport</keyword>
<keyword id="KW-0472">Membrane</keyword>
<keyword id="KW-0479">Metal-binding</keyword>
<keyword id="KW-1185">Reference proteome</keyword>
<keyword id="KW-0915">Sodium</keyword>
<keyword id="KW-0812">Transmembrane</keyword>
<keyword id="KW-1133">Transmembrane helix</keyword>
<keyword id="KW-0813">Transport</keyword>